<accession>Q8CII2</accession>
<accession>Q3TTR0</accession>
<accession>Q8VE51</accession>
<reference key="1">
    <citation type="journal article" date="2005" name="Science">
        <title>The transcriptional landscape of the mammalian genome.</title>
        <authorList>
            <person name="Carninci P."/>
            <person name="Kasukawa T."/>
            <person name="Katayama S."/>
            <person name="Gough J."/>
            <person name="Frith M.C."/>
            <person name="Maeda N."/>
            <person name="Oyama R."/>
            <person name="Ravasi T."/>
            <person name="Lenhard B."/>
            <person name="Wells C."/>
            <person name="Kodzius R."/>
            <person name="Shimokawa K."/>
            <person name="Bajic V.B."/>
            <person name="Brenner S.E."/>
            <person name="Batalov S."/>
            <person name="Forrest A.R."/>
            <person name="Zavolan M."/>
            <person name="Davis M.J."/>
            <person name="Wilming L.G."/>
            <person name="Aidinis V."/>
            <person name="Allen J.E."/>
            <person name="Ambesi-Impiombato A."/>
            <person name="Apweiler R."/>
            <person name="Aturaliya R.N."/>
            <person name="Bailey T.L."/>
            <person name="Bansal M."/>
            <person name="Baxter L."/>
            <person name="Beisel K.W."/>
            <person name="Bersano T."/>
            <person name="Bono H."/>
            <person name="Chalk A.M."/>
            <person name="Chiu K.P."/>
            <person name="Choudhary V."/>
            <person name="Christoffels A."/>
            <person name="Clutterbuck D.R."/>
            <person name="Crowe M.L."/>
            <person name="Dalla E."/>
            <person name="Dalrymple B.P."/>
            <person name="de Bono B."/>
            <person name="Della Gatta G."/>
            <person name="di Bernardo D."/>
            <person name="Down T."/>
            <person name="Engstrom P."/>
            <person name="Fagiolini M."/>
            <person name="Faulkner G."/>
            <person name="Fletcher C.F."/>
            <person name="Fukushima T."/>
            <person name="Furuno M."/>
            <person name="Futaki S."/>
            <person name="Gariboldi M."/>
            <person name="Georgii-Hemming P."/>
            <person name="Gingeras T.R."/>
            <person name="Gojobori T."/>
            <person name="Green R.E."/>
            <person name="Gustincich S."/>
            <person name="Harbers M."/>
            <person name="Hayashi Y."/>
            <person name="Hensch T.K."/>
            <person name="Hirokawa N."/>
            <person name="Hill D."/>
            <person name="Huminiecki L."/>
            <person name="Iacono M."/>
            <person name="Ikeo K."/>
            <person name="Iwama A."/>
            <person name="Ishikawa T."/>
            <person name="Jakt M."/>
            <person name="Kanapin A."/>
            <person name="Katoh M."/>
            <person name="Kawasawa Y."/>
            <person name="Kelso J."/>
            <person name="Kitamura H."/>
            <person name="Kitano H."/>
            <person name="Kollias G."/>
            <person name="Krishnan S.P."/>
            <person name="Kruger A."/>
            <person name="Kummerfeld S.K."/>
            <person name="Kurochkin I.V."/>
            <person name="Lareau L.F."/>
            <person name="Lazarevic D."/>
            <person name="Lipovich L."/>
            <person name="Liu J."/>
            <person name="Liuni S."/>
            <person name="McWilliam S."/>
            <person name="Madan Babu M."/>
            <person name="Madera M."/>
            <person name="Marchionni L."/>
            <person name="Matsuda H."/>
            <person name="Matsuzawa S."/>
            <person name="Miki H."/>
            <person name="Mignone F."/>
            <person name="Miyake S."/>
            <person name="Morris K."/>
            <person name="Mottagui-Tabar S."/>
            <person name="Mulder N."/>
            <person name="Nakano N."/>
            <person name="Nakauchi H."/>
            <person name="Ng P."/>
            <person name="Nilsson R."/>
            <person name="Nishiguchi S."/>
            <person name="Nishikawa S."/>
            <person name="Nori F."/>
            <person name="Ohara O."/>
            <person name="Okazaki Y."/>
            <person name="Orlando V."/>
            <person name="Pang K.C."/>
            <person name="Pavan W.J."/>
            <person name="Pavesi G."/>
            <person name="Pesole G."/>
            <person name="Petrovsky N."/>
            <person name="Piazza S."/>
            <person name="Reed J."/>
            <person name="Reid J.F."/>
            <person name="Ring B.Z."/>
            <person name="Ringwald M."/>
            <person name="Rost B."/>
            <person name="Ruan Y."/>
            <person name="Salzberg S.L."/>
            <person name="Sandelin A."/>
            <person name="Schneider C."/>
            <person name="Schoenbach C."/>
            <person name="Sekiguchi K."/>
            <person name="Semple C.A."/>
            <person name="Seno S."/>
            <person name="Sessa L."/>
            <person name="Sheng Y."/>
            <person name="Shibata Y."/>
            <person name="Shimada H."/>
            <person name="Shimada K."/>
            <person name="Silva D."/>
            <person name="Sinclair B."/>
            <person name="Sperling S."/>
            <person name="Stupka E."/>
            <person name="Sugiura K."/>
            <person name="Sultana R."/>
            <person name="Takenaka Y."/>
            <person name="Taki K."/>
            <person name="Tammoja K."/>
            <person name="Tan S.L."/>
            <person name="Tang S."/>
            <person name="Taylor M.S."/>
            <person name="Tegner J."/>
            <person name="Teichmann S.A."/>
            <person name="Ueda H.R."/>
            <person name="van Nimwegen E."/>
            <person name="Verardo R."/>
            <person name="Wei C.L."/>
            <person name="Yagi K."/>
            <person name="Yamanishi H."/>
            <person name="Zabarovsky E."/>
            <person name="Zhu S."/>
            <person name="Zimmer A."/>
            <person name="Hide W."/>
            <person name="Bult C."/>
            <person name="Grimmond S.M."/>
            <person name="Teasdale R.D."/>
            <person name="Liu E.T."/>
            <person name="Brusic V."/>
            <person name="Quackenbush J."/>
            <person name="Wahlestedt C."/>
            <person name="Mattick J.S."/>
            <person name="Hume D.A."/>
            <person name="Kai C."/>
            <person name="Sasaki D."/>
            <person name="Tomaru Y."/>
            <person name="Fukuda S."/>
            <person name="Kanamori-Katayama M."/>
            <person name="Suzuki M."/>
            <person name="Aoki J."/>
            <person name="Arakawa T."/>
            <person name="Iida J."/>
            <person name="Imamura K."/>
            <person name="Itoh M."/>
            <person name="Kato T."/>
            <person name="Kawaji H."/>
            <person name="Kawagashira N."/>
            <person name="Kawashima T."/>
            <person name="Kojima M."/>
            <person name="Kondo S."/>
            <person name="Konno H."/>
            <person name="Nakano K."/>
            <person name="Ninomiya N."/>
            <person name="Nishio T."/>
            <person name="Okada M."/>
            <person name="Plessy C."/>
            <person name="Shibata K."/>
            <person name="Shiraki T."/>
            <person name="Suzuki S."/>
            <person name="Tagami M."/>
            <person name="Waki K."/>
            <person name="Watahiki A."/>
            <person name="Okamura-Oho Y."/>
            <person name="Suzuki H."/>
            <person name="Kawai J."/>
            <person name="Hayashizaki Y."/>
        </authorList>
    </citation>
    <scope>NUCLEOTIDE SEQUENCE [LARGE SCALE MRNA] (ISOFORMS 1 AND 2)</scope>
    <source>
        <strain>C57BL/6J</strain>
        <tissue>Spinal cord</tissue>
        <tissue>Testis</tissue>
    </source>
</reference>
<reference key="2">
    <citation type="journal article" date="2004" name="Genome Res.">
        <title>The status, quality, and expansion of the NIH full-length cDNA project: the Mammalian Gene Collection (MGC).</title>
        <authorList>
            <consortium name="The MGC Project Team"/>
        </authorList>
    </citation>
    <scope>NUCLEOTIDE SEQUENCE [LARGE SCALE MRNA] (ISOFORM 1)</scope>
    <source>
        <strain>FVB/N</strain>
        <strain>FVB/N-3</strain>
        <tissue>Eye</tissue>
        <tissue>Mammary tumor</tissue>
    </source>
</reference>
<reference key="3">
    <citation type="journal article" date="2010" name="Cell">
        <title>A tissue-specific atlas of mouse protein phosphorylation and expression.</title>
        <authorList>
            <person name="Huttlin E.L."/>
            <person name="Jedrychowski M.P."/>
            <person name="Elias J.E."/>
            <person name="Goswami T."/>
            <person name="Rad R."/>
            <person name="Beausoleil S.A."/>
            <person name="Villen J."/>
            <person name="Haas W."/>
            <person name="Sowa M.E."/>
            <person name="Gygi S.P."/>
        </authorList>
    </citation>
    <scope>IDENTIFICATION BY MASS SPECTROMETRY [LARGE SCALE ANALYSIS]</scope>
    <source>
        <tissue>Kidney</tissue>
        <tissue>Liver</tissue>
        <tissue>Lung</tissue>
        <tissue>Pancreas</tissue>
        <tissue>Spleen</tissue>
        <tissue>Testis</tissue>
    </source>
</reference>
<proteinExistence type="evidence at protein level"/>
<keyword id="KW-0025">Alternative splicing</keyword>
<keyword id="KW-0067">ATP-binding</keyword>
<keyword id="KW-0143">Chaperone</keyword>
<keyword id="KW-0963">Cytoplasm</keyword>
<keyword id="KW-0460">Magnesium</keyword>
<keyword id="KW-0479">Metal-binding</keyword>
<keyword id="KW-0547">Nucleotide-binding</keyword>
<keyword id="KW-0597">Phosphoprotein</keyword>
<keyword id="KW-1185">Reference proteome</keyword>
<name>CD123_MOUSE</name>
<sequence>MKKEHVSHCQFSAWYPLFRSLTIKSVILPLPQNVKDYLLDDGTLVVSGREDPPTCSQSDSGNEAEETQWSDDESTATLTAPEFPEFNTQVQEAINSLGGSVFPKLNWSAPRDAYWIAMNSSLKCKTLSDIFLLFKSSDFITHDFTQPFIHCTDDSPDPCIEYELVLRKWCELIPGAEFRCFVKENKLIGISQRDYTQYYDHISKQKEEICRCIQDFFKEHLQYKFLDEDFVFDIYRDSRGKVWLIDFNPFGEVTDSLLFTWEELTSENNLRGEVTEGDAQEQDSPAFRCTNSEVTVQPSPYLSFGLPKDFVDLSTGEDAHKLIDFLKLKRNEQEDD</sequence>
<gene>
    <name type="primary">Cdc123</name>
</gene>
<organism>
    <name type="scientific">Mus musculus</name>
    <name type="common">Mouse</name>
    <dbReference type="NCBI Taxonomy" id="10090"/>
    <lineage>
        <taxon>Eukaryota</taxon>
        <taxon>Metazoa</taxon>
        <taxon>Chordata</taxon>
        <taxon>Craniata</taxon>
        <taxon>Vertebrata</taxon>
        <taxon>Euteleostomi</taxon>
        <taxon>Mammalia</taxon>
        <taxon>Eutheria</taxon>
        <taxon>Euarchontoglires</taxon>
        <taxon>Glires</taxon>
        <taxon>Rodentia</taxon>
        <taxon>Myomorpha</taxon>
        <taxon>Muroidea</taxon>
        <taxon>Muridae</taxon>
        <taxon>Murinae</taxon>
        <taxon>Mus</taxon>
        <taxon>Mus</taxon>
    </lineage>
</organism>
<dbReference type="EMBL" id="AK090122">
    <property type="protein sequence ID" value="BAC41103.1"/>
    <property type="molecule type" value="mRNA"/>
</dbReference>
<dbReference type="EMBL" id="AK141463">
    <property type="protein sequence ID" value="BAE24692.1"/>
    <property type="molecule type" value="mRNA"/>
</dbReference>
<dbReference type="EMBL" id="AK159208">
    <property type="protein sequence ID" value="BAE34899.1"/>
    <property type="molecule type" value="mRNA"/>
</dbReference>
<dbReference type="EMBL" id="AK161246">
    <property type="protein sequence ID" value="BAE36265.1"/>
    <property type="molecule type" value="mRNA"/>
</dbReference>
<dbReference type="EMBL" id="BC019753">
    <property type="protein sequence ID" value="AAH19753.1"/>
    <property type="molecule type" value="mRNA"/>
</dbReference>
<dbReference type="EMBL" id="BC022972">
    <property type="protein sequence ID" value="AAH22972.1"/>
    <property type="molecule type" value="mRNA"/>
</dbReference>
<dbReference type="EMBL" id="BC023821">
    <property type="protein sequence ID" value="AAH23821.1"/>
    <property type="molecule type" value="mRNA"/>
</dbReference>
<dbReference type="EMBL" id="BC024787">
    <property type="protein sequence ID" value="AAH24787.1"/>
    <property type="molecule type" value="mRNA"/>
</dbReference>
<dbReference type="CCDS" id="CCDS15666.1">
    <molecule id="Q8CII2-1"/>
</dbReference>
<dbReference type="RefSeq" id="NP_001343432.1">
    <molecule id="Q8CII2-2"/>
    <property type="nucleotide sequence ID" value="NM_001356503.1"/>
</dbReference>
<dbReference type="RefSeq" id="NP_598598.1">
    <molecule id="Q8CII2-1"/>
    <property type="nucleotide sequence ID" value="NM_133837.5"/>
</dbReference>
<dbReference type="RefSeq" id="XP_006497629.1">
    <property type="nucleotide sequence ID" value="XM_006497566.2"/>
</dbReference>
<dbReference type="SMR" id="Q8CII2"/>
<dbReference type="BioGRID" id="221145">
    <property type="interactions" value="2"/>
</dbReference>
<dbReference type="FunCoup" id="Q8CII2">
    <property type="interactions" value="2526"/>
</dbReference>
<dbReference type="STRING" id="10090.ENSMUSP00000043033"/>
<dbReference type="iPTMnet" id="Q8CII2"/>
<dbReference type="PhosphoSitePlus" id="Q8CII2"/>
<dbReference type="SwissPalm" id="Q8CII2"/>
<dbReference type="jPOST" id="Q8CII2"/>
<dbReference type="PaxDb" id="10090-ENSMUSP00000043033"/>
<dbReference type="PeptideAtlas" id="Q8CII2"/>
<dbReference type="ProteomicsDB" id="281131">
    <molecule id="Q8CII2-1"/>
</dbReference>
<dbReference type="ProteomicsDB" id="281132">
    <molecule id="Q8CII2-2"/>
</dbReference>
<dbReference type="Pumba" id="Q8CII2"/>
<dbReference type="Antibodypedia" id="24692">
    <property type="antibodies" value="422 antibodies from 30 providers"/>
</dbReference>
<dbReference type="Ensembl" id="ENSMUST00000043864.9">
    <molecule id="Q8CII2-1"/>
    <property type="protein sequence ID" value="ENSMUSP00000043033.4"/>
    <property type="gene ID" value="ENSMUSG00000039128.14"/>
</dbReference>
<dbReference type="GeneID" id="98828"/>
<dbReference type="KEGG" id="mmu:98828"/>
<dbReference type="UCSC" id="uc008ift.1">
    <molecule id="Q8CII2-1"/>
    <property type="organism name" value="mouse"/>
</dbReference>
<dbReference type="UCSC" id="uc008ifu.1">
    <molecule id="Q8CII2-2"/>
    <property type="organism name" value="mouse"/>
</dbReference>
<dbReference type="AGR" id="MGI:2138811"/>
<dbReference type="CTD" id="8872"/>
<dbReference type="MGI" id="MGI:2138811">
    <property type="gene designation" value="Cdc123"/>
</dbReference>
<dbReference type="VEuPathDB" id="HostDB:ENSMUSG00000039128"/>
<dbReference type="eggNOG" id="KOG2983">
    <property type="taxonomic scope" value="Eukaryota"/>
</dbReference>
<dbReference type="GeneTree" id="ENSGT00390000003057"/>
<dbReference type="HOGENOM" id="CLU_034402_0_0_1"/>
<dbReference type="InParanoid" id="Q8CII2"/>
<dbReference type="OMA" id="TFPDPNF"/>
<dbReference type="OrthoDB" id="360540at2759"/>
<dbReference type="PhylomeDB" id="Q8CII2"/>
<dbReference type="TreeFam" id="TF323348"/>
<dbReference type="BioGRID-ORCS" id="98828">
    <property type="hits" value="23 hits in 78 CRISPR screens"/>
</dbReference>
<dbReference type="ChiTaRS" id="Cdc123">
    <property type="organism name" value="mouse"/>
</dbReference>
<dbReference type="PRO" id="PR:Q8CII2"/>
<dbReference type="Proteomes" id="UP000000589">
    <property type="component" value="Chromosome 2"/>
</dbReference>
<dbReference type="RNAct" id="Q8CII2">
    <property type="molecule type" value="protein"/>
</dbReference>
<dbReference type="Bgee" id="ENSMUSG00000039128">
    <property type="expression patterns" value="Expressed in ventricular zone and 272 other cell types or tissues"/>
</dbReference>
<dbReference type="ExpressionAtlas" id="Q8CII2">
    <property type="expression patterns" value="baseline and differential"/>
</dbReference>
<dbReference type="GO" id="GO:0005737">
    <property type="term" value="C:cytoplasm"/>
    <property type="evidence" value="ECO:0000250"/>
    <property type="project" value="UniProtKB"/>
</dbReference>
<dbReference type="GO" id="GO:0005524">
    <property type="term" value="F:ATP binding"/>
    <property type="evidence" value="ECO:0000250"/>
    <property type="project" value="UniProtKB"/>
</dbReference>
<dbReference type="GO" id="GO:0000287">
    <property type="term" value="F:magnesium ion binding"/>
    <property type="evidence" value="ECO:0000250"/>
    <property type="project" value="UniProtKB"/>
</dbReference>
<dbReference type="GO" id="GO:0044183">
    <property type="term" value="F:protein folding chaperone"/>
    <property type="evidence" value="ECO:0000250"/>
    <property type="project" value="UniProtKB"/>
</dbReference>
<dbReference type="GO" id="GO:1905143">
    <property type="term" value="P:eukaryotic translation initiation factor 2 complex assembly"/>
    <property type="evidence" value="ECO:0000250"/>
    <property type="project" value="UniProtKB"/>
</dbReference>
<dbReference type="InterPro" id="IPR009772">
    <property type="entry name" value="CDC123"/>
</dbReference>
<dbReference type="PANTHER" id="PTHR15323:SF6">
    <property type="entry name" value="CELL DIVISION CYCLE PROTEIN 123 HOMOLOG"/>
    <property type="match status" value="1"/>
</dbReference>
<dbReference type="PANTHER" id="PTHR15323">
    <property type="entry name" value="D123 PROTEIN"/>
    <property type="match status" value="1"/>
</dbReference>
<dbReference type="Pfam" id="PF07065">
    <property type="entry name" value="D123"/>
    <property type="match status" value="1"/>
</dbReference>
<dbReference type="PIRSF" id="PIRSF007807">
    <property type="entry name" value="Cdc123"/>
    <property type="match status" value="1"/>
</dbReference>
<feature type="chain" id="PRO_0000228664" description="Translation initiation factor eIF2 assembly protein">
    <location>
        <begin position="1"/>
        <end position="336"/>
    </location>
</feature>
<feature type="region of interest" description="Disordered" evidence="6">
    <location>
        <begin position="48"/>
        <end position="73"/>
    </location>
</feature>
<feature type="compositionally biased region" description="Acidic residues" evidence="6">
    <location>
        <begin position="62"/>
        <end position="73"/>
    </location>
</feature>
<feature type="binding site" evidence="2">
    <location>
        <position position="104"/>
    </location>
    <ligand>
        <name>ATP</name>
        <dbReference type="ChEBI" id="CHEBI:30616"/>
    </ligand>
</feature>
<feature type="binding site" evidence="2">
    <location>
        <position position="107"/>
    </location>
    <ligand>
        <name>ATP</name>
        <dbReference type="ChEBI" id="CHEBI:30616"/>
    </ligand>
</feature>
<feature type="binding site" evidence="2">
    <location>
        <position position="109"/>
    </location>
    <ligand>
        <name>ATP</name>
        <dbReference type="ChEBI" id="CHEBI:30616"/>
    </ligand>
</feature>
<feature type="binding site" evidence="5">
    <location>
        <position position="111"/>
    </location>
    <ligand>
        <name>ATP</name>
        <dbReference type="ChEBI" id="CHEBI:30616"/>
    </ligand>
</feature>
<feature type="binding site" evidence="5">
    <location>
        <position position="167"/>
    </location>
    <ligand>
        <name>ATP</name>
        <dbReference type="ChEBI" id="CHEBI:30616"/>
    </ligand>
</feature>
<feature type="binding site" evidence="2">
    <location>
        <position position="168"/>
    </location>
    <ligand>
        <name>ATP</name>
        <dbReference type="ChEBI" id="CHEBI:30616"/>
    </ligand>
</feature>
<feature type="binding site" evidence="5">
    <location>
        <position position="169"/>
    </location>
    <ligand>
        <name>ATP</name>
        <dbReference type="ChEBI" id="CHEBI:30616"/>
    </ligand>
</feature>
<feature type="binding site" evidence="2">
    <location>
        <position position="170"/>
    </location>
    <ligand>
        <name>ATP</name>
        <dbReference type="ChEBI" id="CHEBI:30616"/>
    </ligand>
</feature>
<feature type="binding site" evidence="2">
    <location>
        <position position="177"/>
    </location>
    <ligand>
        <name>ATP</name>
        <dbReference type="ChEBI" id="CHEBI:30616"/>
    </ligand>
</feature>
<feature type="binding site" evidence="2">
    <location>
        <position position="179"/>
    </location>
    <ligand>
        <name>ATP</name>
        <dbReference type="ChEBI" id="CHEBI:30616"/>
    </ligand>
</feature>
<feature type="binding site" evidence="2">
    <location>
        <position position="193"/>
    </location>
    <ligand>
        <name>ATP</name>
        <dbReference type="ChEBI" id="CHEBI:30616"/>
    </ligand>
</feature>
<feature type="binding site" evidence="5">
    <location>
        <position position="233"/>
    </location>
    <ligand>
        <name>ATP</name>
        <dbReference type="ChEBI" id="CHEBI:30616"/>
    </ligand>
</feature>
<feature type="binding site" evidence="2">
    <location>
        <position position="246"/>
    </location>
    <ligand>
        <name>ATP</name>
        <dbReference type="ChEBI" id="CHEBI:30616"/>
    </ligand>
</feature>
<feature type="binding site" evidence="2">
    <location>
        <position position="246"/>
    </location>
    <ligand>
        <name>Mg(2+)</name>
        <dbReference type="ChEBI" id="CHEBI:18420"/>
    </ligand>
</feature>
<feature type="binding site" evidence="2">
    <location>
        <position position="248"/>
    </location>
    <ligand>
        <name>ATP</name>
        <dbReference type="ChEBI" id="CHEBI:30616"/>
    </ligand>
</feature>
<feature type="binding site" evidence="2">
    <location>
        <position position="248"/>
    </location>
    <ligand>
        <name>Mg(2+)</name>
        <dbReference type="ChEBI" id="CHEBI:18420"/>
    </ligand>
</feature>
<feature type="modified residue" description="Phosphoserine" evidence="2">
    <location>
        <position position="60"/>
    </location>
</feature>
<feature type="splice variant" id="VSP_017691" description="In isoform 2." evidence="7">
    <original>LVLRKWCELIPGAEFRCFVKENKLIGISQRD</original>
    <variation>PNLVQCLYLHDLCLPARATTYLLSIAFKIAP</variation>
    <location>
        <begin position="164"/>
        <end position="194"/>
    </location>
</feature>
<feature type="splice variant" id="VSP_017692" description="In isoform 2." evidence="7">
    <location>
        <begin position="195"/>
        <end position="336"/>
    </location>
</feature>
<feature type="sequence conflict" description="In Ref. 2; AAH23821." evidence="8" ref="2">
    <original>I</original>
    <variation>T</variation>
    <location>
        <position position="213"/>
    </location>
</feature>
<evidence type="ECO:0000250" key="1"/>
<evidence type="ECO:0000250" key="2">
    <source>
        <dbReference type="UniProtKB" id="O75794"/>
    </source>
</evidence>
<evidence type="ECO:0000250" key="3">
    <source>
        <dbReference type="UniProtKB" id="Q05791"/>
    </source>
</evidence>
<evidence type="ECO:0000250" key="4">
    <source>
        <dbReference type="UniProtKB" id="Q62834"/>
    </source>
</evidence>
<evidence type="ECO:0000250" key="5">
    <source>
        <dbReference type="UniProtKB" id="Q9P7N5"/>
    </source>
</evidence>
<evidence type="ECO:0000256" key="6">
    <source>
        <dbReference type="SAM" id="MobiDB-lite"/>
    </source>
</evidence>
<evidence type="ECO:0000303" key="7">
    <source>
    </source>
</evidence>
<evidence type="ECO:0000305" key="8"/>
<comment type="function">
    <text evidence="2 3">ATP-dependent protein-folding chaperone for the eIF2 complex (By similarity). Binds to the gamma subunit of the eIF2 complex which allows the subunit to assemble with the alpha and beta subunits (By similarity).</text>
</comment>
<comment type="subunit">
    <text evidence="2">Interacts with the eIF2 complex gamma subunit EIF2S3 (via C-terminus); the interaction is direct. Interacts with the eIF2 complex alpha subunit EIF2S1. Interacts with the eIF2 complex beta subunit EIF2S2.</text>
</comment>
<comment type="subcellular location">
    <subcellularLocation>
        <location evidence="4">Cytoplasm</location>
    </subcellularLocation>
</comment>
<comment type="alternative products">
    <event type="alternative splicing"/>
    <isoform>
        <id>Q8CII2-1</id>
        <name>1</name>
        <sequence type="displayed"/>
    </isoform>
    <isoform>
        <id>Q8CII2-2</id>
        <name>2</name>
        <sequence type="described" ref="VSP_017691 VSP_017692"/>
    </isoform>
</comment>
<comment type="PTM">
    <text evidence="1">Phosphorylated.</text>
</comment>
<comment type="similarity">
    <text evidence="8">Belongs to the CDC123 family.</text>
</comment>
<protein>
    <recommendedName>
        <fullName evidence="8">Translation initiation factor eIF2 assembly protein</fullName>
    </recommendedName>
    <alternativeName>
        <fullName>Cell division cycle protein 123 homolog</fullName>
    </alternativeName>
</protein>